<feature type="chain" id="PRO_0000269832" description="Pyridoxal kinase PdxY">
    <location>
        <begin position="1"/>
        <end position="287"/>
    </location>
</feature>
<feature type="binding site" evidence="1">
    <location>
        <position position="10"/>
    </location>
    <ligand>
        <name>substrate</name>
    </ligand>
</feature>
<feature type="binding site" evidence="1">
    <location>
        <begin position="45"/>
        <end position="46"/>
    </location>
    <ligand>
        <name>substrate</name>
    </ligand>
</feature>
<feature type="binding site" evidence="1">
    <location>
        <position position="112"/>
    </location>
    <ligand>
        <name>ATP</name>
        <dbReference type="ChEBI" id="CHEBI:30616"/>
    </ligand>
</feature>
<feature type="binding site" evidence="1">
    <location>
        <position position="144"/>
    </location>
    <ligand>
        <name>ATP</name>
        <dbReference type="ChEBI" id="CHEBI:30616"/>
    </ligand>
</feature>
<feature type="binding site" evidence="1">
    <location>
        <position position="149"/>
    </location>
    <ligand>
        <name>ATP</name>
        <dbReference type="ChEBI" id="CHEBI:30616"/>
    </ligand>
</feature>
<feature type="binding site" evidence="1">
    <location>
        <position position="182"/>
    </location>
    <ligand>
        <name>ATP</name>
        <dbReference type="ChEBI" id="CHEBI:30616"/>
    </ligand>
</feature>
<feature type="binding site" evidence="1">
    <location>
        <begin position="209"/>
        <end position="212"/>
    </location>
    <ligand>
        <name>ATP</name>
        <dbReference type="ChEBI" id="CHEBI:30616"/>
    </ligand>
</feature>
<feature type="binding site" evidence="1">
    <location>
        <position position="224"/>
    </location>
    <ligand>
        <name>substrate</name>
    </ligand>
</feature>
<reference key="1">
    <citation type="journal article" date="2002" name="Nucleic Acids Res.">
        <title>Genome sequence of Shigella flexneri 2a: insights into pathogenicity through comparison with genomes of Escherichia coli K12 and O157.</title>
        <authorList>
            <person name="Jin Q."/>
            <person name="Yuan Z."/>
            <person name="Xu J."/>
            <person name="Wang Y."/>
            <person name="Shen Y."/>
            <person name="Lu W."/>
            <person name="Wang J."/>
            <person name="Liu H."/>
            <person name="Yang J."/>
            <person name="Yang F."/>
            <person name="Zhang X."/>
            <person name="Zhang J."/>
            <person name="Yang G."/>
            <person name="Wu H."/>
            <person name="Qu D."/>
            <person name="Dong J."/>
            <person name="Sun L."/>
            <person name="Xue Y."/>
            <person name="Zhao A."/>
            <person name="Gao Y."/>
            <person name="Zhu J."/>
            <person name="Kan B."/>
            <person name="Ding K."/>
            <person name="Chen S."/>
            <person name="Cheng H."/>
            <person name="Yao Z."/>
            <person name="He B."/>
            <person name="Chen R."/>
            <person name="Ma D."/>
            <person name="Qiang B."/>
            <person name="Wen Y."/>
            <person name="Hou Y."/>
            <person name="Yu J."/>
        </authorList>
    </citation>
    <scope>NUCLEOTIDE SEQUENCE [LARGE SCALE GENOMIC DNA]</scope>
    <source>
        <strain>301 / Serotype 2a</strain>
    </source>
</reference>
<reference key="2">
    <citation type="journal article" date="2003" name="Infect. Immun.">
        <title>Complete genome sequence and comparative genomics of Shigella flexneri serotype 2a strain 2457T.</title>
        <authorList>
            <person name="Wei J."/>
            <person name="Goldberg M.B."/>
            <person name="Burland V."/>
            <person name="Venkatesan M.M."/>
            <person name="Deng W."/>
            <person name="Fournier G."/>
            <person name="Mayhew G.F."/>
            <person name="Plunkett G. III"/>
            <person name="Rose D.J."/>
            <person name="Darling A."/>
            <person name="Mau B."/>
            <person name="Perna N.T."/>
            <person name="Payne S.M."/>
            <person name="Runyen-Janecky L.J."/>
            <person name="Zhou S."/>
            <person name="Schwartz D.C."/>
            <person name="Blattner F.R."/>
        </authorList>
    </citation>
    <scope>NUCLEOTIDE SEQUENCE [LARGE SCALE GENOMIC DNA]</scope>
    <source>
        <strain>ATCC 700930 / 2457T / Serotype 2a</strain>
    </source>
</reference>
<dbReference type="EC" id="2.7.1.35" evidence="1"/>
<dbReference type="EMBL" id="AE005674">
    <property type="protein sequence ID" value="AAN43243.1"/>
    <property type="molecule type" value="Genomic_DNA"/>
</dbReference>
<dbReference type="EMBL" id="AE014073">
    <property type="protein sequence ID" value="AAP17129.1"/>
    <property type="molecule type" value="Genomic_DNA"/>
</dbReference>
<dbReference type="RefSeq" id="NP_707536.1">
    <property type="nucleotide sequence ID" value="NC_004337.2"/>
</dbReference>
<dbReference type="RefSeq" id="WP_000977233.1">
    <property type="nucleotide sequence ID" value="NZ_WPGW01000065.1"/>
</dbReference>
<dbReference type="SMR" id="Q83KY1"/>
<dbReference type="STRING" id="198214.SF1661"/>
<dbReference type="PaxDb" id="198214-SF1661"/>
<dbReference type="GeneID" id="1024828"/>
<dbReference type="KEGG" id="sfl:SF1661"/>
<dbReference type="KEGG" id="sfx:S1793"/>
<dbReference type="PATRIC" id="fig|198214.7.peg.1957"/>
<dbReference type="HOGENOM" id="CLU_046496_3_0_6"/>
<dbReference type="UniPathway" id="UPA01068">
    <property type="reaction ID" value="UER00298"/>
</dbReference>
<dbReference type="Proteomes" id="UP000001006">
    <property type="component" value="Chromosome"/>
</dbReference>
<dbReference type="Proteomes" id="UP000002673">
    <property type="component" value="Chromosome"/>
</dbReference>
<dbReference type="GO" id="GO:0005829">
    <property type="term" value="C:cytosol"/>
    <property type="evidence" value="ECO:0007669"/>
    <property type="project" value="TreeGrafter"/>
</dbReference>
<dbReference type="GO" id="GO:0005524">
    <property type="term" value="F:ATP binding"/>
    <property type="evidence" value="ECO:0007669"/>
    <property type="project" value="UniProtKB-UniRule"/>
</dbReference>
<dbReference type="GO" id="GO:0000287">
    <property type="term" value="F:magnesium ion binding"/>
    <property type="evidence" value="ECO:0007669"/>
    <property type="project" value="UniProtKB-UniRule"/>
</dbReference>
<dbReference type="GO" id="GO:0008478">
    <property type="term" value="F:pyridoxal kinase activity"/>
    <property type="evidence" value="ECO:0007669"/>
    <property type="project" value="UniProtKB-UniRule"/>
</dbReference>
<dbReference type="GO" id="GO:0009443">
    <property type="term" value="P:pyridoxal 5'-phosphate salvage"/>
    <property type="evidence" value="ECO:0007669"/>
    <property type="project" value="UniProtKB-UniRule"/>
</dbReference>
<dbReference type="CDD" id="cd01173">
    <property type="entry name" value="pyridoxal_pyridoxamine_kinase"/>
    <property type="match status" value="1"/>
</dbReference>
<dbReference type="FunFam" id="3.40.1190.20:FF:000008">
    <property type="entry name" value="Pyridoxal kinase PdxY"/>
    <property type="match status" value="1"/>
</dbReference>
<dbReference type="Gene3D" id="3.40.1190.20">
    <property type="match status" value="1"/>
</dbReference>
<dbReference type="HAMAP" id="MF_01639">
    <property type="entry name" value="PdxY"/>
    <property type="match status" value="1"/>
</dbReference>
<dbReference type="InterPro" id="IPR013749">
    <property type="entry name" value="PM/HMP-P_kinase-1"/>
</dbReference>
<dbReference type="InterPro" id="IPR004625">
    <property type="entry name" value="PyrdxlKinase"/>
</dbReference>
<dbReference type="InterPro" id="IPR023685">
    <property type="entry name" value="Pyridoxal_kinase_PdxY"/>
</dbReference>
<dbReference type="InterPro" id="IPR029056">
    <property type="entry name" value="Ribokinase-like"/>
</dbReference>
<dbReference type="NCBIfam" id="NF004398">
    <property type="entry name" value="PRK05756.1"/>
    <property type="match status" value="1"/>
</dbReference>
<dbReference type="NCBIfam" id="TIGR00687">
    <property type="entry name" value="pyridox_kin"/>
    <property type="match status" value="1"/>
</dbReference>
<dbReference type="PANTHER" id="PTHR10534">
    <property type="entry name" value="PYRIDOXAL KINASE"/>
    <property type="match status" value="1"/>
</dbReference>
<dbReference type="PANTHER" id="PTHR10534:SF2">
    <property type="entry name" value="PYRIDOXAL KINASE"/>
    <property type="match status" value="1"/>
</dbReference>
<dbReference type="Pfam" id="PF08543">
    <property type="entry name" value="Phos_pyr_kin"/>
    <property type="match status" value="1"/>
</dbReference>
<dbReference type="SUPFAM" id="SSF53613">
    <property type="entry name" value="Ribokinase-like"/>
    <property type="match status" value="1"/>
</dbReference>
<proteinExistence type="inferred from homology"/>
<evidence type="ECO:0000255" key="1">
    <source>
        <dbReference type="HAMAP-Rule" id="MF_01639"/>
    </source>
</evidence>
<sequence length="287" mass="31408">MMKNILAIQSHVVYGHAGNSAAEFPMRRLGANVWPLNTVQFSNHTQYGKWTGCVMPPSHLTEIVQGIAAIDKLHTCDAVLSGYLGSAEQGEHILGIVRQVKAANPQAKYFCDPVMGHPEKGCIVAPGVAEFHVRHGLPASDIIAPNLVELEILCEHAVNNVEEAVLAARELIEQGPQIVLVKHLARAGYSRDRFEMLLVTADEVWHISRPLVDFGMRQPVGVGDVTSGLLLVKLLQGATLQEALEHVTAAVYEIMVTTKAMQEYELQVVAAQDRIAKPEHYFSATKL</sequence>
<protein>
    <recommendedName>
        <fullName evidence="1">Pyridoxal kinase PdxY</fullName>
        <shortName evidence="1">PL kinase</shortName>
        <ecNumber evidence="1">2.7.1.35</ecNumber>
    </recommendedName>
</protein>
<organism>
    <name type="scientific">Shigella flexneri</name>
    <dbReference type="NCBI Taxonomy" id="623"/>
    <lineage>
        <taxon>Bacteria</taxon>
        <taxon>Pseudomonadati</taxon>
        <taxon>Pseudomonadota</taxon>
        <taxon>Gammaproteobacteria</taxon>
        <taxon>Enterobacterales</taxon>
        <taxon>Enterobacteriaceae</taxon>
        <taxon>Shigella</taxon>
    </lineage>
</organism>
<gene>
    <name evidence="1" type="primary">pdxY</name>
    <name type="ordered locus">SF1661</name>
    <name type="ordered locus">S1793</name>
</gene>
<keyword id="KW-0067">ATP-binding</keyword>
<keyword id="KW-0418">Kinase</keyword>
<keyword id="KW-0460">Magnesium</keyword>
<keyword id="KW-0547">Nucleotide-binding</keyword>
<keyword id="KW-1185">Reference proteome</keyword>
<keyword id="KW-0808">Transferase</keyword>
<accession>Q83KY1</accession>
<accession>Q7C1G2</accession>
<comment type="function">
    <text evidence="1">Pyridoxal kinase involved in the salvage pathway of pyridoxal 5'-phosphate (PLP). Catalyzes the phosphorylation of pyridoxal to PLP.</text>
</comment>
<comment type="catalytic activity">
    <reaction evidence="1">
        <text>pyridoxal + ATP = pyridoxal 5'-phosphate + ADP + H(+)</text>
        <dbReference type="Rhea" id="RHEA:10224"/>
        <dbReference type="ChEBI" id="CHEBI:15378"/>
        <dbReference type="ChEBI" id="CHEBI:17310"/>
        <dbReference type="ChEBI" id="CHEBI:30616"/>
        <dbReference type="ChEBI" id="CHEBI:456216"/>
        <dbReference type="ChEBI" id="CHEBI:597326"/>
        <dbReference type="EC" id="2.7.1.35"/>
    </reaction>
</comment>
<comment type="cofactor">
    <cofactor evidence="1">
        <name>Mg(2+)</name>
        <dbReference type="ChEBI" id="CHEBI:18420"/>
    </cofactor>
</comment>
<comment type="pathway">
    <text evidence="1">Cofactor metabolism; pyridoxal 5'-phosphate salvage; pyridoxal 5'-phosphate from pyridoxal: step 1/1.</text>
</comment>
<comment type="subunit">
    <text evidence="1">Homodimer.</text>
</comment>
<comment type="similarity">
    <text evidence="1">Belongs to the pyridoxine kinase family. PdxY subfamily.</text>
</comment>
<name>PDXY_SHIFL</name>